<reference key="1">
    <citation type="submission" date="2005-05" db="EMBL/GenBank/DDBJ databases">
        <title>Cloning and expression of mitochondrial acetoacetyl-CoA thiolase from Dictyostelium discoideum.</title>
        <authorList>
            <person name="Ohmachi T."/>
            <person name="Tanaka T."/>
        </authorList>
    </citation>
    <scope>NUCLEOTIDE SEQUENCE [GENOMIC DNA]</scope>
</reference>
<reference key="2">
    <citation type="journal article" date="2002" name="Nature">
        <title>Sequence and analysis of chromosome 2 of Dictyostelium discoideum.</title>
        <authorList>
            <person name="Gloeckner G."/>
            <person name="Eichinger L."/>
            <person name="Szafranski K."/>
            <person name="Pachebat J.A."/>
            <person name="Bankier A.T."/>
            <person name="Dear P.H."/>
            <person name="Lehmann R."/>
            <person name="Baumgart C."/>
            <person name="Parra G."/>
            <person name="Abril J.F."/>
            <person name="Guigo R."/>
            <person name="Kumpf K."/>
            <person name="Tunggal B."/>
            <person name="Cox E.C."/>
            <person name="Quail M.A."/>
            <person name="Platzer M."/>
            <person name="Rosenthal A."/>
            <person name="Noegel A.A."/>
        </authorList>
    </citation>
    <scope>NUCLEOTIDE SEQUENCE [LARGE SCALE GENOMIC DNA]</scope>
    <source>
        <strain>AX4</strain>
    </source>
</reference>
<reference key="3">
    <citation type="journal article" date="2005" name="Nature">
        <title>The genome of the social amoeba Dictyostelium discoideum.</title>
        <authorList>
            <person name="Eichinger L."/>
            <person name="Pachebat J.A."/>
            <person name="Gloeckner G."/>
            <person name="Rajandream M.A."/>
            <person name="Sucgang R."/>
            <person name="Berriman M."/>
            <person name="Song J."/>
            <person name="Olsen R."/>
            <person name="Szafranski K."/>
            <person name="Xu Q."/>
            <person name="Tunggal B."/>
            <person name="Kummerfeld S."/>
            <person name="Madera M."/>
            <person name="Konfortov B.A."/>
            <person name="Rivero F."/>
            <person name="Bankier A.T."/>
            <person name="Lehmann R."/>
            <person name="Hamlin N."/>
            <person name="Davies R."/>
            <person name="Gaudet P."/>
            <person name="Fey P."/>
            <person name="Pilcher K."/>
            <person name="Chen G."/>
            <person name="Saunders D."/>
            <person name="Sodergren E.J."/>
            <person name="Davis P."/>
            <person name="Kerhornou A."/>
            <person name="Nie X."/>
            <person name="Hall N."/>
            <person name="Anjard C."/>
            <person name="Hemphill L."/>
            <person name="Bason N."/>
            <person name="Farbrother P."/>
            <person name="Desany B."/>
            <person name="Just E."/>
            <person name="Morio T."/>
            <person name="Rost R."/>
            <person name="Churcher C.M."/>
            <person name="Cooper J."/>
            <person name="Haydock S."/>
            <person name="van Driessche N."/>
            <person name="Cronin A."/>
            <person name="Goodhead I."/>
            <person name="Muzny D.M."/>
            <person name="Mourier T."/>
            <person name="Pain A."/>
            <person name="Lu M."/>
            <person name="Harper D."/>
            <person name="Lindsay R."/>
            <person name="Hauser H."/>
            <person name="James K.D."/>
            <person name="Quiles M."/>
            <person name="Madan Babu M."/>
            <person name="Saito T."/>
            <person name="Buchrieser C."/>
            <person name="Wardroper A."/>
            <person name="Felder M."/>
            <person name="Thangavelu M."/>
            <person name="Johnson D."/>
            <person name="Knights A."/>
            <person name="Loulseged H."/>
            <person name="Mungall K.L."/>
            <person name="Oliver K."/>
            <person name="Price C."/>
            <person name="Quail M.A."/>
            <person name="Urushihara H."/>
            <person name="Hernandez J."/>
            <person name="Rabbinowitsch E."/>
            <person name="Steffen D."/>
            <person name="Sanders M."/>
            <person name="Ma J."/>
            <person name="Kohara Y."/>
            <person name="Sharp S."/>
            <person name="Simmonds M.N."/>
            <person name="Spiegler S."/>
            <person name="Tivey A."/>
            <person name="Sugano S."/>
            <person name="White B."/>
            <person name="Walker D."/>
            <person name="Woodward J.R."/>
            <person name="Winckler T."/>
            <person name="Tanaka Y."/>
            <person name="Shaulsky G."/>
            <person name="Schleicher M."/>
            <person name="Weinstock G.M."/>
            <person name="Rosenthal A."/>
            <person name="Cox E.C."/>
            <person name="Chisholm R.L."/>
            <person name="Gibbs R.A."/>
            <person name="Loomis W.F."/>
            <person name="Platzer M."/>
            <person name="Kay R.R."/>
            <person name="Williams J.G."/>
            <person name="Dear P.H."/>
            <person name="Noegel A.A."/>
            <person name="Barrell B.G."/>
            <person name="Kuspa A."/>
        </authorList>
    </citation>
    <scope>NUCLEOTIDE SEQUENCE [LARGE SCALE GENOMIC DNA]</scope>
    <source>
        <strain>AX4</strain>
    </source>
</reference>
<evidence type="ECO:0000250" key="1"/>
<evidence type="ECO:0000305" key="2"/>
<organism>
    <name type="scientific">Dictyostelium discoideum</name>
    <name type="common">Social amoeba</name>
    <dbReference type="NCBI Taxonomy" id="44689"/>
    <lineage>
        <taxon>Eukaryota</taxon>
        <taxon>Amoebozoa</taxon>
        <taxon>Evosea</taxon>
        <taxon>Eumycetozoa</taxon>
        <taxon>Dictyostelia</taxon>
        <taxon>Dictyosteliales</taxon>
        <taxon>Dictyosteliaceae</taxon>
        <taxon>Dictyostelium</taxon>
    </lineage>
</organism>
<dbReference type="EC" id="2.3.1.9"/>
<dbReference type="EMBL" id="AB212872">
    <property type="protein sequence ID" value="BAD98242.1"/>
    <property type="molecule type" value="mRNA"/>
</dbReference>
<dbReference type="EMBL" id="AAFI02000006">
    <property type="protein sequence ID" value="EAL71636.1"/>
    <property type="molecule type" value="Genomic_DNA"/>
</dbReference>
<dbReference type="RefSeq" id="XP_645587.1">
    <property type="nucleotide sequence ID" value="XM_640495.1"/>
</dbReference>
<dbReference type="SMR" id="Q86AD9"/>
<dbReference type="FunCoup" id="Q86AD9">
    <property type="interactions" value="538"/>
</dbReference>
<dbReference type="STRING" id="44689.Q86AD9"/>
<dbReference type="GlyGen" id="Q86AD9">
    <property type="glycosylation" value="1 site"/>
</dbReference>
<dbReference type="PaxDb" id="44689-DDB0231621"/>
<dbReference type="EnsemblProtists" id="EAL71636">
    <property type="protein sequence ID" value="EAL71636"/>
    <property type="gene ID" value="DDB_G0271544"/>
</dbReference>
<dbReference type="GeneID" id="8618040"/>
<dbReference type="KEGG" id="ddi:DDB_G0271544"/>
<dbReference type="dictyBase" id="DDB_G0271544">
    <property type="gene designation" value="acat"/>
</dbReference>
<dbReference type="VEuPathDB" id="AmoebaDB:DDB_G0271544"/>
<dbReference type="eggNOG" id="KOG1390">
    <property type="taxonomic scope" value="Eukaryota"/>
</dbReference>
<dbReference type="HOGENOM" id="CLU_031026_0_1_1"/>
<dbReference type="InParanoid" id="Q86AD9"/>
<dbReference type="OMA" id="ICPSIAI"/>
<dbReference type="PhylomeDB" id="Q86AD9"/>
<dbReference type="BRENDA" id="2.3.1.9">
    <property type="organism ID" value="1939"/>
</dbReference>
<dbReference type="Reactome" id="R-DDI-191273">
    <property type="pathway name" value="Cholesterol biosynthesis"/>
</dbReference>
<dbReference type="Reactome" id="R-DDI-70895">
    <property type="pathway name" value="Branched-chain amino acid catabolism"/>
</dbReference>
<dbReference type="Reactome" id="R-DDI-77108">
    <property type="pathway name" value="Utilization of Ketone Bodies"/>
</dbReference>
<dbReference type="Reactome" id="R-DDI-77111">
    <property type="pathway name" value="Synthesis of Ketone Bodies"/>
</dbReference>
<dbReference type="Reactome" id="R-DDI-9837999">
    <property type="pathway name" value="Mitochondrial protein degradation"/>
</dbReference>
<dbReference type="PRO" id="PR:Q86AD9"/>
<dbReference type="Proteomes" id="UP000002195">
    <property type="component" value="Chromosome 2"/>
</dbReference>
<dbReference type="GO" id="GO:0005829">
    <property type="term" value="C:cytosol"/>
    <property type="evidence" value="ECO:0000314"/>
    <property type="project" value="dictyBase"/>
</dbReference>
<dbReference type="GO" id="GO:0005739">
    <property type="term" value="C:mitochondrion"/>
    <property type="evidence" value="ECO:0000314"/>
    <property type="project" value="dictyBase"/>
</dbReference>
<dbReference type="GO" id="GO:0005777">
    <property type="term" value="C:peroxisome"/>
    <property type="evidence" value="ECO:0000314"/>
    <property type="project" value="dictyBase"/>
</dbReference>
<dbReference type="GO" id="GO:0003985">
    <property type="term" value="F:acetyl-CoA C-acetyltransferase activity"/>
    <property type="evidence" value="ECO:0000314"/>
    <property type="project" value="dictyBase"/>
</dbReference>
<dbReference type="GO" id="GO:0046872">
    <property type="term" value="F:metal ion binding"/>
    <property type="evidence" value="ECO:0007669"/>
    <property type="project" value="UniProtKB-KW"/>
</dbReference>
<dbReference type="GO" id="GO:0006696">
    <property type="term" value="P:ergosterol biosynthetic process"/>
    <property type="evidence" value="ECO:0000250"/>
    <property type="project" value="dictyBase"/>
</dbReference>
<dbReference type="GO" id="GO:0016125">
    <property type="term" value="P:sterol metabolic process"/>
    <property type="evidence" value="ECO:0000318"/>
    <property type="project" value="GO_Central"/>
</dbReference>
<dbReference type="CDD" id="cd00751">
    <property type="entry name" value="thiolase"/>
    <property type="match status" value="1"/>
</dbReference>
<dbReference type="FunFam" id="3.40.47.10:FF:000007">
    <property type="entry name" value="acetyl-CoA acetyltransferase, mitochondrial"/>
    <property type="match status" value="1"/>
</dbReference>
<dbReference type="Gene3D" id="3.40.47.10">
    <property type="match status" value="1"/>
</dbReference>
<dbReference type="InterPro" id="IPR002155">
    <property type="entry name" value="Thiolase"/>
</dbReference>
<dbReference type="InterPro" id="IPR016039">
    <property type="entry name" value="Thiolase-like"/>
</dbReference>
<dbReference type="InterPro" id="IPR020615">
    <property type="entry name" value="Thiolase_acyl_enz_int_AS"/>
</dbReference>
<dbReference type="InterPro" id="IPR020617">
    <property type="entry name" value="Thiolase_C"/>
</dbReference>
<dbReference type="InterPro" id="IPR020613">
    <property type="entry name" value="Thiolase_CS"/>
</dbReference>
<dbReference type="InterPro" id="IPR020616">
    <property type="entry name" value="Thiolase_N"/>
</dbReference>
<dbReference type="NCBIfam" id="TIGR01930">
    <property type="entry name" value="AcCoA-C-Actrans"/>
    <property type="match status" value="1"/>
</dbReference>
<dbReference type="PANTHER" id="PTHR18919:SF156">
    <property type="entry name" value="ACETYL-COA ACETYLTRANSFERASE, MITOCHONDRIAL"/>
    <property type="match status" value="1"/>
</dbReference>
<dbReference type="PANTHER" id="PTHR18919">
    <property type="entry name" value="ACETYL-COA C-ACYLTRANSFERASE"/>
    <property type="match status" value="1"/>
</dbReference>
<dbReference type="Pfam" id="PF02803">
    <property type="entry name" value="Thiolase_C"/>
    <property type="match status" value="1"/>
</dbReference>
<dbReference type="Pfam" id="PF00108">
    <property type="entry name" value="Thiolase_N"/>
    <property type="match status" value="1"/>
</dbReference>
<dbReference type="PIRSF" id="PIRSF000429">
    <property type="entry name" value="Ac-CoA_Ac_transf"/>
    <property type="match status" value="1"/>
</dbReference>
<dbReference type="SUPFAM" id="SSF53901">
    <property type="entry name" value="Thiolase-like"/>
    <property type="match status" value="2"/>
</dbReference>
<dbReference type="PROSITE" id="PS00098">
    <property type="entry name" value="THIOLASE_1"/>
    <property type="match status" value="1"/>
</dbReference>
<dbReference type="PROSITE" id="PS00737">
    <property type="entry name" value="THIOLASE_2"/>
    <property type="match status" value="1"/>
</dbReference>
<protein>
    <recommendedName>
        <fullName>Probable acetyl-CoA acetyltransferase</fullName>
        <ecNumber>2.3.1.9</ecNumber>
    </recommendedName>
    <alternativeName>
        <fullName>Acetoacetyl-CoA thiolase</fullName>
    </alternativeName>
</protein>
<sequence length="414" mass="43466">MISNLSKVLNSNVKRMYTTAKNLESVVIVSAVRTPIGSIGGSLSTIPGTKLSSITIEEAVKRAGIKPSDVDEAIIGNVISANLGQAPARQCALGAGLEQKTITTTINKVCSSGMKAIVFGAQSIALGHSKTVVAGGFESMSQVPYYADKMRFGAKYGNQTFIDGLVRDGLADAYNGSAMGVCGDDCADKYKITREQQDKFAVDSYLRALEAQKNGFFNDEIVQVPIVGRGGKVTYVVEDEEPKKVLFDKIPNLKPAFTPNGTVTPANASKLNDGASSVILMSESHAKELGLKPLARIIGYADAEQAPIEFPTAPALAIPKALKNAGINMSQVDLFEINEAFAVVGLANAKILDIDHNKLNVNGGAVALGHPIGSSGCRIVVTLTHLLQNKNLKYGVAAICNGGGGSTALVLEKL</sequence>
<name>THIL1_DICDI</name>
<comment type="catalytic activity">
    <reaction>
        <text>2 acetyl-CoA = acetoacetyl-CoA + CoA</text>
        <dbReference type="Rhea" id="RHEA:21036"/>
        <dbReference type="ChEBI" id="CHEBI:57286"/>
        <dbReference type="ChEBI" id="CHEBI:57287"/>
        <dbReference type="ChEBI" id="CHEBI:57288"/>
        <dbReference type="EC" id="2.3.1.9"/>
    </reaction>
</comment>
<comment type="similarity">
    <text evidence="2">Belongs to the thiolase-like superfamily. Thiolase family.</text>
</comment>
<keyword id="KW-0012">Acyltransferase</keyword>
<keyword id="KW-0479">Metal-binding</keyword>
<keyword id="KW-0630">Potassium</keyword>
<keyword id="KW-1185">Reference proteome</keyword>
<keyword id="KW-0808">Transferase</keyword>
<accession>Q86AD9</accession>
<accession>Q55AV9</accession>
<feature type="chain" id="PRO_0000327943" description="Probable acetyl-CoA acetyltransferase">
    <location>
        <begin position="1"/>
        <end position="414"/>
    </location>
</feature>
<feature type="active site" description="Acyl-thioester intermediate" evidence="1">
    <location>
        <position position="110"/>
    </location>
</feature>
<feature type="active site" description="Proton acceptor" evidence="1">
    <location>
        <position position="370"/>
    </location>
</feature>
<feature type="active site" description="Proton acceptor" evidence="1">
    <location>
        <position position="400"/>
    </location>
</feature>
<feature type="binding site" evidence="1">
    <location>
        <position position="205"/>
    </location>
    <ligand>
        <name>CoA</name>
        <dbReference type="ChEBI" id="CHEBI:57287"/>
    </ligand>
</feature>
<feature type="binding site" evidence="1">
    <location>
        <position position="205"/>
    </location>
    <ligand>
        <name>K(+)</name>
        <dbReference type="ChEBI" id="CHEBI:29103"/>
    </ligand>
</feature>
<feature type="binding site" evidence="1">
    <location>
        <begin position="244"/>
        <end position="246"/>
    </location>
    <ligand>
        <name>CoA</name>
        <dbReference type="ChEBI" id="CHEBI:57287"/>
    </ligand>
</feature>
<feature type="binding site" evidence="1">
    <location>
        <position position="249"/>
    </location>
    <ligand>
        <name>CoA</name>
        <dbReference type="ChEBI" id="CHEBI:57287"/>
    </ligand>
</feature>
<feature type="binding site" evidence="1">
    <location>
        <position position="266"/>
    </location>
    <ligand>
        <name>K(+)</name>
        <dbReference type="ChEBI" id="CHEBI:29103"/>
    </ligand>
</feature>
<feature type="binding site" evidence="1">
    <location>
        <position position="268"/>
    </location>
    <ligand>
        <name>K(+)</name>
        <dbReference type="ChEBI" id="CHEBI:29103"/>
    </ligand>
</feature>
<feature type="binding site" evidence="1">
    <location>
        <position position="269"/>
    </location>
    <ligand>
        <name>CoA</name>
        <dbReference type="ChEBI" id="CHEBI:57287"/>
    </ligand>
</feature>
<feature type="binding site" evidence="1">
    <location>
        <position position="366"/>
    </location>
    <ligand>
        <name>K(+)</name>
        <dbReference type="ChEBI" id="CHEBI:29103"/>
    </ligand>
</feature>
<gene>
    <name type="ORF">DDB_G0271544</name>
</gene>
<proteinExistence type="evidence at transcript level"/>